<organism>
    <name type="scientific">Nostoc punctiforme (strain ATCC 29133 / PCC 73102)</name>
    <dbReference type="NCBI Taxonomy" id="63737"/>
    <lineage>
        <taxon>Bacteria</taxon>
        <taxon>Bacillati</taxon>
        <taxon>Cyanobacteriota</taxon>
        <taxon>Cyanophyceae</taxon>
        <taxon>Nostocales</taxon>
        <taxon>Nostocaceae</taxon>
        <taxon>Nostoc</taxon>
    </lineage>
</organism>
<keyword id="KW-0012">Acyltransferase</keyword>
<keyword id="KW-0963">Cytoplasm</keyword>
<keyword id="KW-1185">Reference proteome</keyword>
<keyword id="KW-0808">Transferase</keyword>
<protein>
    <recommendedName>
        <fullName evidence="1">Octanoyltransferase</fullName>
        <ecNumber evidence="1">2.3.1.181</ecNumber>
    </recommendedName>
    <alternativeName>
        <fullName evidence="1">Lipoate-protein ligase B</fullName>
    </alternativeName>
    <alternativeName>
        <fullName evidence="1">Lipoyl/octanoyl transferase</fullName>
    </alternativeName>
    <alternativeName>
        <fullName evidence="1">Octanoyl-[acyl-carrier-protein]-protein N-octanoyltransferase</fullName>
    </alternativeName>
</protein>
<evidence type="ECO:0000255" key="1">
    <source>
        <dbReference type="HAMAP-Rule" id="MF_00013"/>
    </source>
</evidence>
<evidence type="ECO:0000255" key="2">
    <source>
        <dbReference type="PROSITE-ProRule" id="PRU01067"/>
    </source>
</evidence>
<proteinExistence type="inferred from homology"/>
<accession>B2IVM2</accession>
<feature type="chain" id="PRO_1000089466" description="Octanoyltransferase">
    <location>
        <begin position="1"/>
        <end position="230"/>
    </location>
</feature>
<feature type="domain" description="BPL/LPL catalytic" evidence="2">
    <location>
        <begin position="40"/>
        <end position="218"/>
    </location>
</feature>
<feature type="active site" description="Acyl-thioester intermediate" evidence="1">
    <location>
        <position position="180"/>
    </location>
</feature>
<feature type="binding site" evidence="1">
    <location>
        <begin position="82"/>
        <end position="89"/>
    </location>
    <ligand>
        <name>substrate</name>
    </ligand>
</feature>
<feature type="binding site" evidence="1">
    <location>
        <begin position="149"/>
        <end position="151"/>
    </location>
    <ligand>
        <name>substrate</name>
    </ligand>
</feature>
<feature type="binding site" evidence="1">
    <location>
        <begin position="162"/>
        <end position="164"/>
    </location>
    <ligand>
        <name>substrate</name>
    </ligand>
</feature>
<feature type="site" description="Lowers pKa of active site Cys" evidence="1">
    <location>
        <position position="146"/>
    </location>
</feature>
<gene>
    <name evidence="1" type="primary">lipB</name>
    <name type="ordered locus">Npun_F2874</name>
</gene>
<comment type="function">
    <text evidence="1">Catalyzes the transfer of endogenously produced octanoic acid from octanoyl-acyl-carrier-protein onto the lipoyl domains of lipoate-dependent enzymes. Lipoyl-ACP can also act as a substrate although octanoyl-ACP is likely to be the physiological substrate.</text>
</comment>
<comment type="catalytic activity">
    <reaction evidence="1">
        <text>octanoyl-[ACP] + L-lysyl-[protein] = N(6)-octanoyl-L-lysyl-[protein] + holo-[ACP] + H(+)</text>
        <dbReference type="Rhea" id="RHEA:17665"/>
        <dbReference type="Rhea" id="RHEA-COMP:9636"/>
        <dbReference type="Rhea" id="RHEA-COMP:9685"/>
        <dbReference type="Rhea" id="RHEA-COMP:9752"/>
        <dbReference type="Rhea" id="RHEA-COMP:9928"/>
        <dbReference type="ChEBI" id="CHEBI:15378"/>
        <dbReference type="ChEBI" id="CHEBI:29969"/>
        <dbReference type="ChEBI" id="CHEBI:64479"/>
        <dbReference type="ChEBI" id="CHEBI:78463"/>
        <dbReference type="ChEBI" id="CHEBI:78809"/>
        <dbReference type="EC" id="2.3.1.181"/>
    </reaction>
</comment>
<comment type="pathway">
    <text evidence="1">Protein modification; protein lipoylation via endogenous pathway; protein N(6)-(lipoyl)lysine from octanoyl-[acyl-carrier-protein]: step 1/2.</text>
</comment>
<comment type="subcellular location">
    <subcellularLocation>
        <location evidence="1">Cytoplasm</location>
    </subcellularLocation>
</comment>
<comment type="miscellaneous">
    <text evidence="1">In the reaction, the free carboxyl group of octanoic acid is attached via an amide linkage to the epsilon-amino group of a specific lysine residue of lipoyl domains of lipoate-dependent enzymes.</text>
</comment>
<comment type="similarity">
    <text evidence="1">Belongs to the LipB family.</text>
</comment>
<dbReference type="EC" id="2.3.1.181" evidence="1"/>
<dbReference type="EMBL" id="CP001037">
    <property type="protein sequence ID" value="ACC81407.1"/>
    <property type="molecule type" value="Genomic_DNA"/>
</dbReference>
<dbReference type="RefSeq" id="WP_012409398.1">
    <property type="nucleotide sequence ID" value="NC_010628.1"/>
</dbReference>
<dbReference type="SMR" id="B2IVM2"/>
<dbReference type="STRING" id="63737.Npun_F2874"/>
<dbReference type="EnsemblBacteria" id="ACC81407">
    <property type="protein sequence ID" value="ACC81407"/>
    <property type="gene ID" value="Npun_F2874"/>
</dbReference>
<dbReference type="KEGG" id="npu:Npun_F2874"/>
<dbReference type="eggNOG" id="COG0321">
    <property type="taxonomic scope" value="Bacteria"/>
</dbReference>
<dbReference type="HOGENOM" id="CLU_035168_1_0_3"/>
<dbReference type="OrthoDB" id="9787061at2"/>
<dbReference type="PhylomeDB" id="B2IVM2"/>
<dbReference type="UniPathway" id="UPA00538">
    <property type="reaction ID" value="UER00592"/>
</dbReference>
<dbReference type="Proteomes" id="UP000001191">
    <property type="component" value="Chromosome"/>
</dbReference>
<dbReference type="GO" id="GO:0005737">
    <property type="term" value="C:cytoplasm"/>
    <property type="evidence" value="ECO:0007669"/>
    <property type="project" value="UniProtKB-SubCell"/>
</dbReference>
<dbReference type="GO" id="GO:0033819">
    <property type="term" value="F:lipoyl(octanoyl) transferase activity"/>
    <property type="evidence" value="ECO:0007669"/>
    <property type="project" value="UniProtKB-EC"/>
</dbReference>
<dbReference type="GO" id="GO:0036211">
    <property type="term" value="P:protein modification process"/>
    <property type="evidence" value="ECO:0007669"/>
    <property type="project" value="InterPro"/>
</dbReference>
<dbReference type="CDD" id="cd16444">
    <property type="entry name" value="LipB"/>
    <property type="match status" value="1"/>
</dbReference>
<dbReference type="FunFam" id="3.30.930.10:FF:000035">
    <property type="entry name" value="Putative lipoyltransferase 2, mitochondrial"/>
    <property type="match status" value="1"/>
</dbReference>
<dbReference type="Gene3D" id="3.30.930.10">
    <property type="entry name" value="Bira Bifunctional Protein, Domain 2"/>
    <property type="match status" value="1"/>
</dbReference>
<dbReference type="HAMAP" id="MF_00013">
    <property type="entry name" value="LipB"/>
    <property type="match status" value="1"/>
</dbReference>
<dbReference type="InterPro" id="IPR045864">
    <property type="entry name" value="aa-tRNA-synth_II/BPL/LPL"/>
</dbReference>
<dbReference type="InterPro" id="IPR004143">
    <property type="entry name" value="BPL_LPL_catalytic"/>
</dbReference>
<dbReference type="InterPro" id="IPR000544">
    <property type="entry name" value="Octanoyltransferase"/>
</dbReference>
<dbReference type="InterPro" id="IPR020605">
    <property type="entry name" value="Octanoyltransferase_CS"/>
</dbReference>
<dbReference type="NCBIfam" id="TIGR00214">
    <property type="entry name" value="lipB"/>
    <property type="match status" value="1"/>
</dbReference>
<dbReference type="NCBIfam" id="NF010925">
    <property type="entry name" value="PRK14345.1"/>
    <property type="match status" value="1"/>
</dbReference>
<dbReference type="PANTHER" id="PTHR10993:SF7">
    <property type="entry name" value="LIPOYLTRANSFERASE 2, MITOCHONDRIAL-RELATED"/>
    <property type="match status" value="1"/>
</dbReference>
<dbReference type="PANTHER" id="PTHR10993">
    <property type="entry name" value="OCTANOYLTRANSFERASE"/>
    <property type="match status" value="1"/>
</dbReference>
<dbReference type="Pfam" id="PF21948">
    <property type="entry name" value="LplA-B_cat"/>
    <property type="match status" value="1"/>
</dbReference>
<dbReference type="PIRSF" id="PIRSF016262">
    <property type="entry name" value="LPLase"/>
    <property type="match status" value="1"/>
</dbReference>
<dbReference type="SUPFAM" id="SSF55681">
    <property type="entry name" value="Class II aaRS and biotin synthetases"/>
    <property type="match status" value="1"/>
</dbReference>
<dbReference type="PROSITE" id="PS51733">
    <property type="entry name" value="BPL_LPL_CATALYTIC"/>
    <property type="match status" value="1"/>
</dbReference>
<dbReference type="PROSITE" id="PS01313">
    <property type="entry name" value="LIPB"/>
    <property type="match status" value="1"/>
</dbReference>
<sequence>MIRSKEPHNNLCLLYNQGLMPYLDAHRWQRSLLNERIHDPSLDDVLILLEHPPVYTLGQGSNSDFIKFDIDQGEYDVHRVERGGEVTYHCPGQLVGYPILNLQRYRKDLHWYLRQLEEVIIRVLTVYGLQGERIPAFTGVWLQGRKVAAIGIKVSRWITMHGFALNVCPDMKGFERIVPCGISDKPVGSLAEWIPGITCQEVRFYVAQCFAEVFGVELIESQPQDFFRPE</sequence>
<reference key="1">
    <citation type="journal article" date="2013" name="Plant Physiol.">
        <title>A Nostoc punctiforme Sugar Transporter Necessary to Establish a Cyanobacterium-Plant Symbiosis.</title>
        <authorList>
            <person name="Ekman M."/>
            <person name="Picossi S."/>
            <person name="Campbell E.L."/>
            <person name="Meeks J.C."/>
            <person name="Flores E."/>
        </authorList>
    </citation>
    <scope>NUCLEOTIDE SEQUENCE [LARGE SCALE GENOMIC DNA]</scope>
    <source>
        <strain>ATCC 29133 / PCC 73102</strain>
    </source>
</reference>
<name>LIPB_NOSP7</name>